<reference key="1">
    <citation type="journal article" date="2006" name="PLoS Genet.">
        <title>The complete genome sequence and comparative genome analysis of the high pathogenicity Yersinia enterocolitica strain 8081.</title>
        <authorList>
            <person name="Thomson N.R."/>
            <person name="Howard S."/>
            <person name="Wren B.W."/>
            <person name="Holden M.T.G."/>
            <person name="Crossman L."/>
            <person name="Challis G.L."/>
            <person name="Churcher C."/>
            <person name="Mungall K."/>
            <person name="Brooks K."/>
            <person name="Chillingworth T."/>
            <person name="Feltwell T."/>
            <person name="Abdellah Z."/>
            <person name="Hauser H."/>
            <person name="Jagels K."/>
            <person name="Maddison M."/>
            <person name="Moule S."/>
            <person name="Sanders M."/>
            <person name="Whitehead S."/>
            <person name="Quail M.A."/>
            <person name="Dougan G."/>
            <person name="Parkhill J."/>
            <person name="Prentice M.B."/>
        </authorList>
    </citation>
    <scope>NUCLEOTIDE SEQUENCE [LARGE SCALE GENOMIC DNA]</scope>
    <source>
        <strain>NCTC 13174 / 8081</strain>
    </source>
</reference>
<feature type="chain" id="PRO_0000362512" description="ATP synthase subunit a">
    <location>
        <begin position="1"/>
        <end position="274"/>
    </location>
</feature>
<feature type="transmembrane region" description="Helical" evidence="1">
    <location>
        <begin position="43"/>
        <end position="63"/>
    </location>
</feature>
<feature type="transmembrane region" description="Helical" evidence="1">
    <location>
        <begin position="103"/>
        <end position="123"/>
    </location>
</feature>
<feature type="transmembrane region" description="Helical" evidence="1">
    <location>
        <begin position="149"/>
        <end position="169"/>
    </location>
</feature>
<feature type="transmembrane region" description="Helical" evidence="1">
    <location>
        <begin position="223"/>
        <end position="243"/>
    </location>
</feature>
<feature type="transmembrane region" description="Helical" evidence="1">
    <location>
        <begin position="245"/>
        <end position="265"/>
    </location>
</feature>
<dbReference type="EMBL" id="AM286415">
    <property type="protein sequence ID" value="CAL14226.1"/>
    <property type="molecule type" value="Genomic_DNA"/>
</dbReference>
<dbReference type="RefSeq" id="WP_005161179.1">
    <property type="nucleotide sequence ID" value="NC_008800.1"/>
</dbReference>
<dbReference type="RefSeq" id="YP_001008344.1">
    <property type="nucleotide sequence ID" value="NC_008800.1"/>
</dbReference>
<dbReference type="SMR" id="A1JTD4"/>
<dbReference type="GeneID" id="93971152"/>
<dbReference type="KEGG" id="yen:YE4212"/>
<dbReference type="PATRIC" id="fig|393305.7.peg.4480"/>
<dbReference type="eggNOG" id="COG0356">
    <property type="taxonomic scope" value="Bacteria"/>
</dbReference>
<dbReference type="HOGENOM" id="CLU_041018_1_0_6"/>
<dbReference type="OrthoDB" id="9789241at2"/>
<dbReference type="Proteomes" id="UP000000642">
    <property type="component" value="Chromosome"/>
</dbReference>
<dbReference type="GO" id="GO:0005886">
    <property type="term" value="C:plasma membrane"/>
    <property type="evidence" value="ECO:0007669"/>
    <property type="project" value="UniProtKB-SubCell"/>
</dbReference>
<dbReference type="GO" id="GO:0045259">
    <property type="term" value="C:proton-transporting ATP synthase complex"/>
    <property type="evidence" value="ECO:0007669"/>
    <property type="project" value="UniProtKB-KW"/>
</dbReference>
<dbReference type="GO" id="GO:0046933">
    <property type="term" value="F:proton-transporting ATP synthase activity, rotational mechanism"/>
    <property type="evidence" value="ECO:0007669"/>
    <property type="project" value="UniProtKB-UniRule"/>
</dbReference>
<dbReference type="GO" id="GO:0042777">
    <property type="term" value="P:proton motive force-driven plasma membrane ATP synthesis"/>
    <property type="evidence" value="ECO:0007669"/>
    <property type="project" value="TreeGrafter"/>
</dbReference>
<dbReference type="CDD" id="cd00310">
    <property type="entry name" value="ATP-synt_Fo_a_6"/>
    <property type="match status" value="1"/>
</dbReference>
<dbReference type="FunFam" id="1.20.120.220:FF:000002">
    <property type="entry name" value="ATP synthase subunit a"/>
    <property type="match status" value="1"/>
</dbReference>
<dbReference type="Gene3D" id="1.20.120.220">
    <property type="entry name" value="ATP synthase, F0 complex, subunit A"/>
    <property type="match status" value="1"/>
</dbReference>
<dbReference type="HAMAP" id="MF_01393">
    <property type="entry name" value="ATP_synth_a_bact"/>
    <property type="match status" value="1"/>
</dbReference>
<dbReference type="InterPro" id="IPR045082">
    <property type="entry name" value="ATP_syn_F0_a_bact/chloroplast"/>
</dbReference>
<dbReference type="InterPro" id="IPR000568">
    <property type="entry name" value="ATP_synth_F0_asu"/>
</dbReference>
<dbReference type="InterPro" id="IPR023011">
    <property type="entry name" value="ATP_synth_F0_asu_AS"/>
</dbReference>
<dbReference type="InterPro" id="IPR035908">
    <property type="entry name" value="F0_ATP_A_sf"/>
</dbReference>
<dbReference type="NCBIfam" id="TIGR01131">
    <property type="entry name" value="ATP_synt_6_or_A"/>
    <property type="match status" value="1"/>
</dbReference>
<dbReference type="NCBIfam" id="NF004477">
    <property type="entry name" value="PRK05815.1-1"/>
    <property type="match status" value="1"/>
</dbReference>
<dbReference type="PANTHER" id="PTHR42823">
    <property type="entry name" value="ATP SYNTHASE SUBUNIT A, CHLOROPLASTIC"/>
    <property type="match status" value="1"/>
</dbReference>
<dbReference type="PANTHER" id="PTHR42823:SF3">
    <property type="entry name" value="ATP SYNTHASE SUBUNIT A, CHLOROPLASTIC"/>
    <property type="match status" value="1"/>
</dbReference>
<dbReference type="Pfam" id="PF00119">
    <property type="entry name" value="ATP-synt_A"/>
    <property type="match status" value="1"/>
</dbReference>
<dbReference type="PRINTS" id="PR00123">
    <property type="entry name" value="ATPASEA"/>
</dbReference>
<dbReference type="SUPFAM" id="SSF81336">
    <property type="entry name" value="F1F0 ATP synthase subunit A"/>
    <property type="match status" value="1"/>
</dbReference>
<dbReference type="PROSITE" id="PS00449">
    <property type="entry name" value="ATPASE_A"/>
    <property type="match status" value="1"/>
</dbReference>
<sequence>MSASGEISTPRDYIGHHLNNLQLDLRTFELVNPHSPGPATFWTLNIDSLFFSVVLGLAFLFVFRKVAAGATSGVPGKLQTAVELIIGFVDNSVRDMYHGKSKVIAPLALTVFVWVLLMNMMDLLPIDLLPYIGEHVFGLPALRVVPTADVSITLSMALGVFILILFYSIKMKGVGGFVKELTMQPFNHPIFIPVNLILEGVSLLSKPVSLGLRLFGNMYAGELIFILIAGLLPWWSQWMLSLPWAIFHILIITLQAFIFMVLTIVYLSMASEEH</sequence>
<name>ATP6_YERE8</name>
<keyword id="KW-0066">ATP synthesis</keyword>
<keyword id="KW-0997">Cell inner membrane</keyword>
<keyword id="KW-1003">Cell membrane</keyword>
<keyword id="KW-0138">CF(0)</keyword>
<keyword id="KW-0375">Hydrogen ion transport</keyword>
<keyword id="KW-0406">Ion transport</keyword>
<keyword id="KW-0472">Membrane</keyword>
<keyword id="KW-0812">Transmembrane</keyword>
<keyword id="KW-1133">Transmembrane helix</keyword>
<keyword id="KW-0813">Transport</keyword>
<evidence type="ECO:0000255" key="1">
    <source>
        <dbReference type="HAMAP-Rule" id="MF_01393"/>
    </source>
</evidence>
<proteinExistence type="inferred from homology"/>
<comment type="function">
    <text evidence="1">Key component of the proton channel; it plays a direct role in the translocation of protons across the membrane.</text>
</comment>
<comment type="subunit">
    <text evidence="1">F-type ATPases have 2 components, CF(1) - the catalytic core - and CF(0) - the membrane proton channel. CF(1) has five subunits: alpha(3), beta(3), gamma(1), delta(1), epsilon(1). CF(0) has three main subunits: a(1), b(2) and c(9-12). The alpha and beta chains form an alternating ring which encloses part of the gamma chain. CF(1) is attached to CF(0) by a central stalk formed by the gamma and epsilon chains, while a peripheral stalk is formed by the delta and b chains.</text>
</comment>
<comment type="subcellular location">
    <subcellularLocation>
        <location evidence="1">Cell inner membrane</location>
        <topology evidence="1">Multi-pass membrane protein</topology>
    </subcellularLocation>
</comment>
<comment type="similarity">
    <text evidence="1">Belongs to the ATPase A chain family.</text>
</comment>
<organism>
    <name type="scientific">Yersinia enterocolitica serotype O:8 / biotype 1B (strain NCTC 13174 / 8081)</name>
    <dbReference type="NCBI Taxonomy" id="393305"/>
    <lineage>
        <taxon>Bacteria</taxon>
        <taxon>Pseudomonadati</taxon>
        <taxon>Pseudomonadota</taxon>
        <taxon>Gammaproteobacteria</taxon>
        <taxon>Enterobacterales</taxon>
        <taxon>Yersiniaceae</taxon>
        <taxon>Yersinia</taxon>
    </lineage>
</organism>
<accession>A1JTD4</accession>
<protein>
    <recommendedName>
        <fullName evidence="1">ATP synthase subunit a</fullName>
    </recommendedName>
    <alternativeName>
        <fullName evidence="1">ATP synthase F0 sector subunit a</fullName>
    </alternativeName>
    <alternativeName>
        <fullName evidence="1">F-ATPase subunit 6</fullName>
    </alternativeName>
</protein>
<gene>
    <name evidence="1" type="primary">atpB</name>
    <name type="ordered locus">YE4212</name>
</gene>